<gene>
    <name type="ORF">ORF20</name>
</gene>
<feature type="chain" id="PRO_0000384888" description="Uncharacterized protein ORF20">
    <location>
        <begin position="1"/>
        <end position="137"/>
    </location>
</feature>
<feature type="transmembrane region" description="Helical" evidence="1">
    <location>
        <begin position="116"/>
        <end position="136"/>
    </location>
</feature>
<protein>
    <recommendedName>
        <fullName>Uncharacterized protein ORF20</fullName>
    </recommendedName>
</protein>
<comment type="subcellular location">
    <subcellularLocation>
        <location evidence="2">Host membrane</location>
        <topology evidence="2">Single-pass membrane protein</topology>
    </subcellularLocation>
</comment>
<sequence>MVSSKWNMITELFLGAANSYAQMRGKITHYEIQHDGTIQHEFIDPSNTEEKAWDLEDNPEQQISVKGYANSCTLTVKDDSNEVELVPSGRYKQYMENQILSQTMQTGSMDSQKMMYLSIANLATLLLFGIIGLSIIT</sequence>
<organism>
    <name type="scientific">His1 virus (isolate Australia/Victoria)</name>
    <name type="common">His1V</name>
    <name type="synonym">Haloarcula hispanica virus 1</name>
    <dbReference type="NCBI Taxonomy" id="654912"/>
    <lineage>
        <taxon>Viruses</taxon>
        <taxon>Viruses incertae sedis</taxon>
        <taxon>Halspiviridae</taxon>
        <taxon>Salterprovirus</taxon>
        <taxon>Salterprovirus His1</taxon>
    </lineage>
</organism>
<reference key="1">
    <citation type="journal article" date="2006" name="Virology">
        <title>His1 and His2 are distantly related, spindle-shaped haloviruses belonging to the novel virus group, Salterprovirus.</title>
        <authorList>
            <person name="Bath C."/>
            <person name="Cukalac T."/>
            <person name="Porter K."/>
            <person name="Dyall-Smith M.L."/>
        </authorList>
    </citation>
    <scope>NUCLEOTIDE SEQUENCE [GENOMIC DNA]</scope>
</reference>
<keyword id="KW-1043">Host membrane</keyword>
<keyword id="KW-0472">Membrane</keyword>
<keyword id="KW-1185">Reference proteome</keyword>
<keyword id="KW-0812">Transmembrane</keyword>
<keyword id="KW-1133">Transmembrane helix</keyword>
<proteinExistence type="predicted"/>
<accession>Q25BH5</accession>
<organismHost>
    <name type="scientific">Haloarcula hispanica</name>
    <dbReference type="NCBI Taxonomy" id="51589"/>
</organismHost>
<evidence type="ECO:0000255" key="1"/>
<evidence type="ECO:0000305" key="2"/>
<dbReference type="EMBL" id="AF191796">
    <property type="protein sequence ID" value="AAQ13735.1"/>
    <property type="molecule type" value="Genomic_DNA"/>
</dbReference>
<dbReference type="RefSeq" id="YP_529532.1">
    <property type="nucleotide sequence ID" value="NC_007914.1"/>
</dbReference>
<dbReference type="KEGG" id="vg:5142388"/>
<dbReference type="Proteomes" id="UP000007024">
    <property type="component" value="Segment"/>
</dbReference>
<dbReference type="GO" id="GO:0033644">
    <property type="term" value="C:host cell membrane"/>
    <property type="evidence" value="ECO:0007669"/>
    <property type="project" value="UniProtKB-SubCell"/>
</dbReference>
<dbReference type="GO" id="GO:0016020">
    <property type="term" value="C:membrane"/>
    <property type="evidence" value="ECO:0007669"/>
    <property type="project" value="UniProtKB-KW"/>
</dbReference>
<name>Y020_HIS1I</name>